<comment type="subunit">
    <text evidence="1">Forms oligomers.</text>
</comment>
<comment type="subcellular location">
    <subcellularLocation>
        <location evidence="1">Cytoplasm</location>
        <location evidence="1">Nucleoid</location>
    </subcellularLocation>
</comment>
<comment type="similarity">
    <text evidence="1">Belongs to the MraZ family.</text>
</comment>
<dbReference type="EMBL" id="CP000458">
    <property type="protein sequence ID" value="ABK07304.1"/>
    <property type="molecule type" value="Genomic_DNA"/>
</dbReference>
<dbReference type="RefSeq" id="WP_006477025.1">
    <property type="nucleotide sequence ID" value="NC_008542.1"/>
</dbReference>
<dbReference type="SMR" id="A0K477"/>
<dbReference type="GeneID" id="83047322"/>
<dbReference type="KEGG" id="bch:Bcen2424_0550"/>
<dbReference type="HOGENOM" id="CLU_107907_2_1_4"/>
<dbReference type="GO" id="GO:0005737">
    <property type="term" value="C:cytoplasm"/>
    <property type="evidence" value="ECO:0007669"/>
    <property type="project" value="UniProtKB-UniRule"/>
</dbReference>
<dbReference type="GO" id="GO:0009295">
    <property type="term" value="C:nucleoid"/>
    <property type="evidence" value="ECO:0007669"/>
    <property type="project" value="UniProtKB-SubCell"/>
</dbReference>
<dbReference type="GO" id="GO:0003700">
    <property type="term" value="F:DNA-binding transcription factor activity"/>
    <property type="evidence" value="ECO:0007669"/>
    <property type="project" value="UniProtKB-UniRule"/>
</dbReference>
<dbReference type="GO" id="GO:0000976">
    <property type="term" value="F:transcription cis-regulatory region binding"/>
    <property type="evidence" value="ECO:0007669"/>
    <property type="project" value="TreeGrafter"/>
</dbReference>
<dbReference type="GO" id="GO:2000143">
    <property type="term" value="P:negative regulation of DNA-templated transcription initiation"/>
    <property type="evidence" value="ECO:0007669"/>
    <property type="project" value="TreeGrafter"/>
</dbReference>
<dbReference type="CDD" id="cd16321">
    <property type="entry name" value="MraZ_C"/>
    <property type="match status" value="1"/>
</dbReference>
<dbReference type="CDD" id="cd16320">
    <property type="entry name" value="MraZ_N"/>
    <property type="match status" value="1"/>
</dbReference>
<dbReference type="Gene3D" id="3.40.1550.20">
    <property type="entry name" value="Transcriptional regulator MraZ domain"/>
    <property type="match status" value="1"/>
</dbReference>
<dbReference type="HAMAP" id="MF_01008">
    <property type="entry name" value="MraZ"/>
    <property type="match status" value="1"/>
</dbReference>
<dbReference type="InterPro" id="IPR003444">
    <property type="entry name" value="MraZ"/>
</dbReference>
<dbReference type="InterPro" id="IPR035644">
    <property type="entry name" value="MraZ_C"/>
</dbReference>
<dbReference type="InterPro" id="IPR020603">
    <property type="entry name" value="MraZ_dom"/>
</dbReference>
<dbReference type="InterPro" id="IPR035642">
    <property type="entry name" value="MraZ_N"/>
</dbReference>
<dbReference type="InterPro" id="IPR038619">
    <property type="entry name" value="MraZ_sf"/>
</dbReference>
<dbReference type="InterPro" id="IPR007159">
    <property type="entry name" value="SpoVT-AbrB_dom"/>
</dbReference>
<dbReference type="InterPro" id="IPR037914">
    <property type="entry name" value="SpoVT-AbrB_sf"/>
</dbReference>
<dbReference type="NCBIfam" id="TIGR00242">
    <property type="entry name" value="division/cell wall cluster transcriptional repressor MraZ"/>
    <property type="match status" value="1"/>
</dbReference>
<dbReference type="PANTHER" id="PTHR34701">
    <property type="entry name" value="TRANSCRIPTIONAL REGULATOR MRAZ"/>
    <property type="match status" value="1"/>
</dbReference>
<dbReference type="PANTHER" id="PTHR34701:SF1">
    <property type="entry name" value="TRANSCRIPTIONAL REGULATOR MRAZ"/>
    <property type="match status" value="1"/>
</dbReference>
<dbReference type="Pfam" id="PF02381">
    <property type="entry name" value="MraZ"/>
    <property type="match status" value="2"/>
</dbReference>
<dbReference type="SUPFAM" id="SSF89447">
    <property type="entry name" value="AbrB/MazE/MraZ-like"/>
    <property type="match status" value="1"/>
</dbReference>
<dbReference type="PROSITE" id="PS51740">
    <property type="entry name" value="SPOVT_ABRB"/>
    <property type="match status" value="2"/>
</dbReference>
<feature type="chain" id="PRO_1000062851" description="Transcriptional regulator MraZ">
    <location>
        <begin position="1"/>
        <end position="142"/>
    </location>
</feature>
<feature type="domain" description="SpoVT-AbrB 1" evidence="2">
    <location>
        <begin position="5"/>
        <end position="51"/>
    </location>
</feature>
<feature type="domain" description="SpoVT-AbrB 2" evidence="2">
    <location>
        <begin position="77"/>
        <end position="120"/>
    </location>
</feature>
<accession>A0K477</accession>
<name>MRAZ_BURCH</name>
<protein>
    <recommendedName>
        <fullName>Transcriptional regulator MraZ</fullName>
    </recommendedName>
</protein>
<evidence type="ECO:0000255" key="1">
    <source>
        <dbReference type="HAMAP-Rule" id="MF_01008"/>
    </source>
</evidence>
<evidence type="ECO:0000255" key="2">
    <source>
        <dbReference type="PROSITE-ProRule" id="PRU01076"/>
    </source>
</evidence>
<sequence length="142" mass="15885">MFQGASALTLDAKGRMSVPSRYREALQGQAEGRVTVTKHPDGCLLLFPRPEWEVFRAKIAALPMDAHWWRRIFLGNAMDVDLDSAGRILVSPELRMAAGLEKEVMLLGMGSHFELWDSQTYNAKEQAAMAQGMPDALKNFTF</sequence>
<organism>
    <name type="scientific">Burkholderia cenocepacia (strain HI2424)</name>
    <dbReference type="NCBI Taxonomy" id="331272"/>
    <lineage>
        <taxon>Bacteria</taxon>
        <taxon>Pseudomonadati</taxon>
        <taxon>Pseudomonadota</taxon>
        <taxon>Betaproteobacteria</taxon>
        <taxon>Burkholderiales</taxon>
        <taxon>Burkholderiaceae</taxon>
        <taxon>Burkholderia</taxon>
        <taxon>Burkholderia cepacia complex</taxon>
    </lineage>
</organism>
<reference key="1">
    <citation type="submission" date="2006-08" db="EMBL/GenBank/DDBJ databases">
        <title>Complete sequence of chromosome 1 of Burkholderia cenocepacia HI2424.</title>
        <authorList>
            <person name="Copeland A."/>
            <person name="Lucas S."/>
            <person name="Lapidus A."/>
            <person name="Barry K."/>
            <person name="Detter J.C."/>
            <person name="Glavina del Rio T."/>
            <person name="Hammon N."/>
            <person name="Israni S."/>
            <person name="Pitluck S."/>
            <person name="Chain P."/>
            <person name="Malfatti S."/>
            <person name="Shin M."/>
            <person name="Vergez L."/>
            <person name="Schmutz J."/>
            <person name="Larimer F."/>
            <person name="Land M."/>
            <person name="Hauser L."/>
            <person name="Kyrpides N."/>
            <person name="Kim E."/>
            <person name="LiPuma J.J."/>
            <person name="Gonzalez C.F."/>
            <person name="Konstantinidis K."/>
            <person name="Tiedje J.M."/>
            <person name="Richardson P."/>
        </authorList>
    </citation>
    <scope>NUCLEOTIDE SEQUENCE [LARGE SCALE GENOMIC DNA]</scope>
    <source>
        <strain>HI2424</strain>
    </source>
</reference>
<proteinExistence type="inferred from homology"/>
<keyword id="KW-0963">Cytoplasm</keyword>
<keyword id="KW-0238">DNA-binding</keyword>
<keyword id="KW-0677">Repeat</keyword>
<keyword id="KW-0804">Transcription</keyword>
<keyword id="KW-0805">Transcription regulation</keyword>
<gene>
    <name evidence="1" type="primary">mraZ</name>
    <name type="ordered locus">Bcen2424_0550</name>
</gene>